<accession>Q0EF98</accession>
<organism>
    <name type="scientific">Callithrix jacchus</name>
    <name type="common">White-tufted-ear marmoset</name>
    <dbReference type="NCBI Taxonomy" id="9483"/>
    <lineage>
        <taxon>Eukaryota</taxon>
        <taxon>Metazoa</taxon>
        <taxon>Chordata</taxon>
        <taxon>Craniata</taxon>
        <taxon>Vertebrata</taxon>
        <taxon>Euteleostomi</taxon>
        <taxon>Mammalia</taxon>
        <taxon>Eutheria</taxon>
        <taxon>Euarchontoglires</taxon>
        <taxon>Primates</taxon>
        <taxon>Haplorrhini</taxon>
        <taxon>Platyrrhini</taxon>
        <taxon>Cebidae</taxon>
        <taxon>Callitrichinae</taxon>
        <taxon>Callithrix</taxon>
        <taxon>Callithrix</taxon>
    </lineage>
</organism>
<keyword id="KW-0963">Cytoplasm</keyword>
<keyword id="KW-0560">Oxidoreductase</keyword>
<keyword id="KW-0575">Peroxidase</keyword>
<keyword id="KW-1185">Reference proteome</keyword>
<keyword id="KW-0712">Selenocysteine</keyword>
<name>GPX2_CALJA</name>
<reference key="1">
    <citation type="journal article" date="2005" name="Comp. Biochem. Physiol.">
        <title>Structure, gene expression, and evolution of primate glutathione peroxidases.</title>
        <authorList>
            <person name="Fukuhara R."/>
            <person name="Kageyama T."/>
        </authorList>
    </citation>
    <scope>NUCLEOTIDE SEQUENCE [MRNA]</scope>
</reference>
<gene>
    <name type="primary">GPX2</name>
</gene>
<evidence type="ECO:0000250" key="1">
    <source>
        <dbReference type="UniProtKB" id="O70325"/>
    </source>
</evidence>
<evidence type="ECO:0000250" key="2">
    <source>
        <dbReference type="UniProtKB" id="P18283"/>
    </source>
</evidence>
<evidence type="ECO:0000305" key="3"/>
<proteinExistence type="evidence at transcript level"/>
<dbReference type="EC" id="1.11.1.9" evidence="2"/>
<dbReference type="EC" id="1.11.1.12" evidence="2"/>
<dbReference type="EMBL" id="AB121005">
    <property type="protein sequence ID" value="BAF31852.1"/>
    <property type="molecule type" value="mRNA"/>
</dbReference>
<dbReference type="STRING" id="9483.ENSCJAP00000065289"/>
<dbReference type="InParanoid" id="Q0EF98"/>
<dbReference type="Proteomes" id="UP000008225">
    <property type="component" value="Unplaced"/>
</dbReference>
<dbReference type="GO" id="GO:0005829">
    <property type="term" value="C:cytosol"/>
    <property type="evidence" value="ECO:0007669"/>
    <property type="project" value="UniProtKB-SubCell"/>
</dbReference>
<dbReference type="GO" id="GO:0004602">
    <property type="term" value="F:glutathione peroxidase activity"/>
    <property type="evidence" value="ECO:0000250"/>
    <property type="project" value="UniProtKB"/>
</dbReference>
<dbReference type="GO" id="GO:0047066">
    <property type="term" value="F:phospholipid-hydroperoxide glutathione peroxidase activity"/>
    <property type="evidence" value="ECO:0007669"/>
    <property type="project" value="RHEA"/>
</dbReference>
<dbReference type="GO" id="GO:0006979">
    <property type="term" value="P:response to oxidative stress"/>
    <property type="evidence" value="ECO:0007669"/>
    <property type="project" value="InterPro"/>
</dbReference>
<dbReference type="CDD" id="cd00340">
    <property type="entry name" value="GSH_Peroxidase"/>
    <property type="match status" value="1"/>
</dbReference>
<dbReference type="FunFam" id="3.40.30.10:FF:000153">
    <property type="entry name" value="Glutathione peroxidase"/>
    <property type="match status" value="1"/>
</dbReference>
<dbReference type="Gene3D" id="3.40.30.10">
    <property type="entry name" value="Glutaredoxin"/>
    <property type="match status" value="1"/>
</dbReference>
<dbReference type="InterPro" id="IPR000889">
    <property type="entry name" value="Glutathione_peroxidase"/>
</dbReference>
<dbReference type="InterPro" id="IPR029759">
    <property type="entry name" value="GPX_AS"/>
</dbReference>
<dbReference type="InterPro" id="IPR036249">
    <property type="entry name" value="Thioredoxin-like_sf"/>
</dbReference>
<dbReference type="PANTHER" id="PTHR11592">
    <property type="entry name" value="GLUTATHIONE PEROXIDASE"/>
    <property type="match status" value="1"/>
</dbReference>
<dbReference type="PANTHER" id="PTHR11592:SF36">
    <property type="entry name" value="GLUTATHIONE PEROXIDASE 2"/>
    <property type="match status" value="1"/>
</dbReference>
<dbReference type="Pfam" id="PF00255">
    <property type="entry name" value="GSHPx"/>
    <property type="match status" value="1"/>
</dbReference>
<dbReference type="PIRSF" id="PIRSF000303">
    <property type="entry name" value="Glutathion_perox"/>
    <property type="match status" value="1"/>
</dbReference>
<dbReference type="PRINTS" id="PR01011">
    <property type="entry name" value="GLUTPROXDASE"/>
</dbReference>
<dbReference type="SUPFAM" id="SSF52833">
    <property type="entry name" value="Thioredoxin-like"/>
    <property type="match status" value="1"/>
</dbReference>
<dbReference type="PROSITE" id="PS00460">
    <property type="entry name" value="GLUTATHIONE_PEROXID_1"/>
    <property type="match status" value="1"/>
</dbReference>
<dbReference type="PROSITE" id="PS51355">
    <property type="entry name" value="GLUTATHIONE_PEROXID_3"/>
    <property type="match status" value="1"/>
</dbReference>
<sequence>MAFIAKSFYDLSAISLDGEKVDFNTFRGRAVLIENVASLUGTTTRDFTQLNELQCRFPRRLVVLGFPCHQFGHQENCQNEEILNSLKYVRPGGGYQPTFTLVQKCEVNGQNEHPVFAYLKDKLPYPHDDPFSLMTDPKLIIWSPVRRSDVAWNFEKFLIGPEGEPFRRYSRTFPTINIEPDIKRLLNVAI</sequence>
<comment type="function">
    <text evidence="2">Catalyzes the reduction of hydroperoxides in a glutathione-dependent manner thus regulating cellular redox homeostasis. Can reduce small soluble hydroperoxides such as H2O2, cumene hydroperoxide and tert-butyl hydroperoxide, as well as several fatty acid-derived hydroperoxides. Cannot reduce phosphatidycholine hydroperoxide.</text>
</comment>
<comment type="catalytic activity">
    <reaction evidence="2">
        <text>2 glutathione + H2O2 = glutathione disulfide + 2 H2O</text>
        <dbReference type="Rhea" id="RHEA:16833"/>
        <dbReference type="ChEBI" id="CHEBI:15377"/>
        <dbReference type="ChEBI" id="CHEBI:16240"/>
        <dbReference type="ChEBI" id="CHEBI:57925"/>
        <dbReference type="ChEBI" id="CHEBI:58297"/>
        <dbReference type="EC" id="1.11.1.9"/>
    </reaction>
    <physiologicalReaction direction="left-to-right" evidence="2">
        <dbReference type="Rhea" id="RHEA:16834"/>
    </physiologicalReaction>
</comment>
<comment type="catalytic activity">
    <reaction evidence="2">
        <text>a hydroperoxy polyunsaturated fatty acid + 2 glutathione = a hydroxy polyunsaturated fatty acid + glutathione disulfide + H2O</text>
        <dbReference type="Rhea" id="RHEA:19057"/>
        <dbReference type="ChEBI" id="CHEBI:15377"/>
        <dbReference type="ChEBI" id="CHEBI:57925"/>
        <dbReference type="ChEBI" id="CHEBI:58297"/>
        <dbReference type="ChEBI" id="CHEBI:131871"/>
        <dbReference type="ChEBI" id="CHEBI:134019"/>
        <dbReference type="EC" id="1.11.1.12"/>
    </reaction>
    <physiologicalReaction direction="left-to-right" evidence="2">
        <dbReference type="Rhea" id="RHEA:19058"/>
    </physiologicalReaction>
</comment>
<comment type="catalytic activity">
    <reaction evidence="2">
        <text>tert-butyl hydroperoxide + 2 glutathione = tert-butanol + glutathione disulfide + H2O</text>
        <dbReference type="Rhea" id="RHEA:69412"/>
        <dbReference type="ChEBI" id="CHEBI:15377"/>
        <dbReference type="ChEBI" id="CHEBI:45895"/>
        <dbReference type="ChEBI" id="CHEBI:57925"/>
        <dbReference type="ChEBI" id="CHEBI:58297"/>
        <dbReference type="ChEBI" id="CHEBI:64090"/>
    </reaction>
    <physiologicalReaction direction="left-to-right" evidence="2">
        <dbReference type="Rhea" id="RHEA:69413"/>
    </physiologicalReaction>
</comment>
<comment type="catalytic activity">
    <reaction evidence="2">
        <text>cumene hydroperoxide + 2 glutathione = 2-phenylpropan-2-ol + glutathione disulfide + H2O</text>
        <dbReference type="Rhea" id="RHEA:69651"/>
        <dbReference type="ChEBI" id="CHEBI:15377"/>
        <dbReference type="ChEBI" id="CHEBI:57925"/>
        <dbReference type="ChEBI" id="CHEBI:58297"/>
        <dbReference type="ChEBI" id="CHEBI:78673"/>
        <dbReference type="ChEBI" id="CHEBI:131607"/>
    </reaction>
    <physiologicalReaction direction="left-to-right" evidence="2">
        <dbReference type="Rhea" id="RHEA:69652"/>
    </physiologicalReaction>
</comment>
<comment type="catalytic activity">
    <reaction evidence="2">
        <text>(13S)-hydroperoxy-(9Z,11E)-octadecadienoate + 2 glutathione = (13S)-hydroxy-(9Z,11E)-octadecadienoate + glutathione disulfide + H2O</text>
        <dbReference type="Rhea" id="RHEA:48888"/>
        <dbReference type="ChEBI" id="CHEBI:15377"/>
        <dbReference type="ChEBI" id="CHEBI:57466"/>
        <dbReference type="ChEBI" id="CHEBI:57925"/>
        <dbReference type="ChEBI" id="CHEBI:58297"/>
        <dbReference type="ChEBI" id="CHEBI:90850"/>
    </reaction>
    <physiologicalReaction direction="left-to-right" evidence="2">
        <dbReference type="Rhea" id="RHEA:48889"/>
    </physiologicalReaction>
</comment>
<comment type="catalytic activity">
    <reaction evidence="2">
        <text>(5S)-hydroperoxy-(6E,8Z,11Z,14Z)-eicosatetraenoate + 2 glutathione = (5S)-hydroxy-(6E,8Z,11Z,14Z)-eicosatetraenoate + glutathione disulfide + H2O</text>
        <dbReference type="Rhea" id="RHEA:48620"/>
        <dbReference type="ChEBI" id="CHEBI:15377"/>
        <dbReference type="ChEBI" id="CHEBI:57450"/>
        <dbReference type="ChEBI" id="CHEBI:57925"/>
        <dbReference type="ChEBI" id="CHEBI:58297"/>
        <dbReference type="ChEBI" id="CHEBI:90632"/>
    </reaction>
    <physiologicalReaction direction="left-to-right" evidence="2">
        <dbReference type="Rhea" id="RHEA:48621"/>
    </physiologicalReaction>
</comment>
<comment type="catalytic activity">
    <reaction evidence="2">
        <text>(12R)-hydroperoxy-(5Z,8Z,10E,14Z)-eicosatetraenoate + 2 glutathione = (12R)-hydroxy-(5Z,8Z,10E,14Z)-eicosatetraenoate + glutathione disulfide + H2O</text>
        <dbReference type="Rhea" id="RHEA:76691"/>
        <dbReference type="ChEBI" id="CHEBI:15377"/>
        <dbReference type="ChEBI" id="CHEBI:57925"/>
        <dbReference type="ChEBI" id="CHEBI:58297"/>
        <dbReference type="ChEBI" id="CHEBI:75230"/>
        <dbReference type="ChEBI" id="CHEBI:83343"/>
    </reaction>
    <physiologicalReaction direction="left-to-right" evidence="2">
        <dbReference type="Rhea" id="RHEA:76692"/>
    </physiologicalReaction>
</comment>
<comment type="catalytic activity">
    <reaction evidence="2">
        <text>(15S)-hydroperoxy-(5Z,8Z,11Z,13E)-eicosatetraenoate + 2 glutathione = (15S)-hydroxy-(5Z,8Z,11Z,13E)-eicosatetraenoate + glutathione disulfide + H2O</text>
        <dbReference type="Rhea" id="RHEA:76695"/>
        <dbReference type="ChEBI" id="CHEBI:15377"/>
        <dbReference type="ChEBI" id="CHEBI:57409"/>
        <dbReference type="ChEBI" id="CHEBI:57446"/>
        <dbReference type="ChEBI" id="CHEBI:57925"/>
        <dbReference type="ChEBI" id="CHEBI:58297"/>
    </reaction>
    <physiologicalReaction direction="left-to-right" evidence="2">
        <dbReference type="Rhea" id="RHEA:76696"/>
    </physiologicalReaction>
</comment>
<comment type="subunit">
    <text evidence="2">Homotetramer.</text>
</comment>
<comment type="subcellular location">
    <subcellularLocation>
        <location evidence="2">Cytoplasm</location>
        <location evidence="2">Cytosol</location>
    </subcellularLocation>
</comment>
<comment type="similarity">
    <text evidence="3">Belongs to the glutathione peroxidase family.</text>
</comment>
<feature type="chain" id="PRO_0000318640" description="Glutathione peroxidase 2">
    <location>
        <begin position="1"/>
        <end position="190"/>
    </location>
</feature>
<feature type="active site" evidence="1">
    <location>
        <position position="40"/>
    </location>
</feature>
<feature type="non-standard amino acid" description="Selenocysteine" evidence="1">
    <location>
        <position position="40"/>
    </location>
</feature>
<protein>
    <recommendedName>
        <fullName>Glutathione peroxidase 2</fullName>
        <shortName>GPx-2</shortName>
        <shortName>GSHPx-2</shortName>
        <ecNumber evidence="2">1.11.1.9</ecNumber>
    </recommendedName>
    <alternativeName>
        <fullName>Glutathione peroxidase-gastrointestinal</fullName>
        <shortName>GPx-GI</shortName>
        <shortName>GSHPx-GI</shortName>
    </alternativeName>
    <alternativeName>
        <fullName>Phospholipid hydroperoxide glutathione peroxidase GPX2</fullName>
        <ecNumber evidence="2">1.11.1.12</ecNumber>
    </alternativeName>
</protein>